<organism>
    <name type="scientific">Rhizobium sp. (strain PP-F2F-G36)</name>
    <dbReference type="NCBI Taxonomy" id="2135649"/>
    <lineage>
        <taxon>Bacteria</taxon>
        <taxon>Pseudomonadati</taxon>
        <taxon>Pseudomonadota</taxon>
        <taxon>Alphaproteobacteria</taxon>
        <taxon>Hyphomicrobiales</taxon>
        <taxon>Rhizobiaceae</taxon>
        <taxon>Rhizobium/Agrobacterium group</taxon>
        <taxon>Rhizobium</taxon>
    </lineage>
</organism>
<comment type="function">
    <text evidence="5">Pycsar (pyrimidine cyclase system for antiphage resistance) provides immunity against bacteriophage. The pyrimidine cyclase (PycC) synthesizes cyclic nucleotides in response to infection; these serve as specific second messenger signals. The signals activate the nearby effector, leading to bacterial cell death and abortive phage infection. A clade A Pycsar system.</text>
</comment>
<comment type="function">
    <text evidence="5">The effector gene of a two-gene Pycsar system. Expression of this and uridylate cyclase RsPycC (AC A0A4R2TZQ0) probably confers resistance to bacteriophage. The genes are probably only expressed in response to bacteriophage infection. Probably only responds to cUMP (produced by its cognate NTP cyclase), acts by impairing membrane integrity.</text>
</comment>
<comment type="subcellular location">
    <subcellularLocation>
        <location evidence="4">Cell inner membrane</location>
        <topology evidence="1">Multi-pass membrane protein</topology>
    </subcellularLocation>
</comment>
<gene>
    <name evidence="2" type="primary">pycTM</name>
    <name evidence="3" type="ORF">C8J34_10223</name>
</gene>
<accession>A0A4R2UGS4</accession>
<protein>
    <recommendedName>
        <fullName>Pycsar effector protein RsPycTM</fullName>
        <shortName evidence="2">RsPycTM</shortName>
    </recommendedName>
</protein>
<reference key="1">
    <citation type="submission" date="2019-03" db="EMBL/GenBank/DDBJ databases">
        <title>Genomic Encyclopedia of Type Strains, Phase IV (KMG-V): Genome sequencing to study the core and pangenomes of soil and plant-associated prokaryotes.</title>
        <authorList>
            <person name="Whitman W."/>
        </authorList>
    </citation>
    <scope>NUCLEOTIDE SEQUENCE [LARGE SCALE GENOMIC DNA]</scope>
    <source>
        <strain>PP-F2F-G36</strain>
    </source>
</reference>
<reference key="2">
    <citation type="journal article" date="2021" name="Cell">
        <title>Cyclic CMP and cyclic UMP mediate bacterial immunity against phages.</title>
        <authorList>
            <person name="Tal N."/>
            <person name="Morehouse B.R."/>
            <person name="Millman A."/>
            <person name="Stokar-Avihail A."/>
            <person name="Avraham C."/>
            <person name="Fedorenko T."/>
            <person name="Yirmiya E."/>
            <person name="Herbst E."/>
            <person name="Brandis A."/>
            <person name="Mehlman T."/>
            <person name="Oppenheimer-Shaanan Y."/>
            <person name="Keszei A.F.A."/>
            <person name="Shao S."/>
            <person name="Amitai G."/>
            <person name="Kranzusch P.J."/>
            <person name="Sorek R."/>
        </authorList>
    </citation>
    <scope>FUNCTION</scope>
    <scope>CLASSIFICATION</scope>
    <source>
        <strain>PP-F2F-G36</strain>
    </source>
</reference>
<sequence length="175" mass="19558">MSANHTRMIDLSKFAEAKNAALLTFCSVWMGAIITLLRSPDELPLGFDYAFKASLTVLFIAAIISLKSLMPKFLNQVHKREDEYKNLLYFGDIDQIGTGAYPGMAADLYTPTEGASATPTYLHDLAVQTAIHAKIAHRKFRLFNWAGSLVLFAFGIMMVPPILFCIRWAVNRLHC</sequence>
<evidence type="ECO:0000255" key="1"/>
<evidence type="ECO:0000303" key="2">
    <source>
    </source>
</evidence>
<evidence type="ECO:0000303" key="3">
    <source ref="1"/>
</evidence>
<evidence type="ECO:0000305" key="4"/>
<evidence type="ECO:0000305" key="5">
    <source>
    </source>
</evidence>
<keyword id="KW-0051">Antiviral defense</keyword>
<keyword id="KW-0997">Cell inner membrane</keyword>
<keyword id="KW-1003">Cell membrane</keyword>
<keyword id="KW-0472">Membrane</keyword>
<keyword id="KW-0547">Nucleotide-binding</keyword>
<keyword id="KW-0812">Transmembrane</keyword>
<keyword id="KW-1133">Transmembrane helix</keyword>
<feature type="chain" id="PRO_0000455238" description="Pycsar effector protein RsPycTM">
    <location>
        <begin position="1"/>
        <end position="175"/>
    </location>
</feature>
<feature type="transmembrane region" description="Helical" evidence="1">
    <location>
        <begin position="17"/>
        <end position="37"/>
    </location>
</feature>
<feature type="transmembrane region" description="Helical" evidence="1">
    <location>
        <begin position="44"/>
        <end position="64"/>
    </location>
</feature>
<feature type="transmembrane region" description="Helical" evidence="1">
    <location>
        <begin position="146"/>
        <end position="166"/>
    </location>
</feature>
<name>PCTM_RHIS2</name>
<proteinExistence type="inferred from homology"/>
<dbReference type="EMBL" id="SLYE01000002">
    <property type="protein sequence ID" value="TCQ09629.1"/>
    <property type="molecule type" value="Genomic_DNA"/>
</dbReference>
<dbReference type="SMR" id="A0A4R2UGS4"/>
<dbReference type="GO" id="GO:0005886">
    <property type="term" value="C:plasma membrane"/>
    <property type="evidence" value="ECO:0007669"/>
    <property type="project" value="UniProtKB-SubCell"/>
</dbReference>
<dbReference type="GO" id="GO:0000166">
    <property type="term" value="F:nucleotide binding"/>
    <property type="evidence" value="ECO:0007669"/>
    <property type="project" value="UniProtKB-KW"/>
</dbReference>
<dbReference type="GO" id="GO:0051607">
    <property type="term" value="P:defense response to virus"/>
    <property type="evidence" value="ECO:0007669"/>
    <property type="project" value="UniProtKB-KW"/>
</dbReference>
<dbReference type="InterPro" id="IPR043760">
    <property type="entry name" value="PycTM"/>
</dbReference>
<dbReference type="Pfam" id="PF18967">
    <property type="entry name" value="PycTM"/>
    <property type="match status" value="1"/>
</dbReference>